<keyword id="KW-0067">ATP-binding</keyword>
<keyword id="KW-0143">Chaperone</keyword>
<keyword id="KW-0479">Metal-binding</keyword>
<keyword id="KW-0547">Nucleotide-binding</keyword>
<keyword id="KW-1185">Reference proteome</keyword>
<keyword id="KW-0862">Zinc</keyword>
<dbReference type="EMBL" id="CT573213">
    <property type="protein sequence ID" value="CAJ60561.1"/>
    <property type="molecule type" value="Genomic_DNA"/>
</dbReference>
<dbReference type="RefSeq" id="WP_011603087.1">
    <property type="nucleotide sequence ID" value="NC_008278.1"/>
</dbReference>
<dbReference type="SMR" id="Q0RPH1"/>
<dbReference type="STRING" id="326424.FRAAL1912"/>
<dbReference type="KEGG" id="fal:FRAAL1912"/>
<dbReference type="eggNOG" id="COG1219">
    <property type="taxonomic scope" value="Bacteria"/>
</dbReference>
<dbReference type="HOGENOM" id="CLU_014218_8_2_11"/>
<dbReference type="OrthoDB" id="9804062at2"/>
<dbReference type="Proteomes" id="UP000000657">
    <property type="component" value="Chromosome"/>
</dbReference>
<dbReference type="GO" id="GO:0009376">
    <property type="term" value="C:HslUV protease complex"/>
    <property type="evidence" value="ECO:0007669"/>
    <property type="project" value="TreeGrafter"/>
</dbReference>
<dbReference type="GO" id="GO:0005524">
    <property type="term" value="F:ATP binding"/>
    <property type="evidence" value="ECO:0007669"/>
    <property type="project" value="UniProtKB-UniRule"/>
</dbReference>
<dbReference type="GO" id="GO:0016887">
    <property type="term" value="F:ATP hydrolysis activity"/>
    <property type="evidence" value="ECO:0007669"/>
    <property type="project" value="InterPro"/>
</dbReference>
<dbReference type="GO" id="GO:0140662">
    <property type="term" value="F:ATP-dependent protein folding chaperone"/>
    <property type="evidence" value="ECO:0007669"/>
    <property type="project" value="InterPro"/>
</dbReference>
<dbReference type="GO" id="GO:0046983">
    <property type="term" value="F:protein dimerization activity"/>
    <property type="evidence" value="ECO:0007669"/>
    <property type="project" value="InterPro"/>
</dbReference>
<dbReference type="GO" id="GO:0051082">
    <property type="term" value="F:unfolded protein binding"/>
    <property type="evidence" value="ECO:0007669"/>
    <property type="project" value="UniProtKB-UniRule"/>
</dbReference>
<dbReference type="GO" id="GO:0008270">
    <property type="term" value="F:zinc ion binding"/>
    <property type="evidence" value="ECO:0007669"/>
    <property type="project" value="InterPro"/>
</dbReference>
<dbReference type="GO" id="GO:0051301">
    <property type="term" value="P:cell division"/>
    <property type="evidence" value="ECO:0007669"/>
    <property type="project" value="TreeGrafter"/>
</dbReference>
<dbReference type="GO" id="GO:0051603">
    <property type="term" value="P:proteolysis involved in protein catabolic process"/>
    <property type="evidence" value="ECO:0007669"/>
    <property type="project" value="TreeGrafter"/>
</dbReference>
<dbReference type="CDD" id="cd19497">
    <property type="entry name" value="RecA-like_ClpX"/>
    <property type="match status" value="1"/>
</dbReference>
<dbReference type="FunFam" id="1.10.8.60:FF:000002">
    <property type="entry name" value="ATP-dependent Clp protease ATP-binding subunit ClpX"/>
    <property type="match status" value="1"/>
</dbReference>
<dbReference type="FunFam" id="3.40.50.300:FF:000005">
    <property type="entry name" value="ATP-dependent Clp protease ATP-binding subunit ClpX"/>
    <property type="match status" value="1"/>
</dbReference>
<dbReference type="Gene3D" id="1.10.8.60">
    <property type="match status" value="1"/>
</dbReference>
<dbReference type="Gene3D" id="6.20.220.10">
    <property type="entry name" value="ClpX chaperone, C4-type zinc finger domain"/>
    <property type="match status" value="1"/>
</dbReference>
<dbReference type="Gene3D" id="3.40.50.300">
    <property type="entry name" value="P-loop containing nucleotide triphosphate hydrolases"/>
    <property type="match status" value="1"/>
</dbReference>
<dbReference type="HAMAP" id="MF_00175">
    <property type="entry name" value="ClpX"/>
    <property type="match status" value="1"/>
</dbReference>
<dbReference type="InterPro" id="IPR003593">
    <property type="entry name" value="AAA+_ATPase"/>
</dbReference>
<dbReference type="InterPro" id="IPR050052">
    <property type="entry name" value="ATP-dep_Clp_protease_ClpX"/>
</dbReference>
<dbReference type="InterPro" id="IPR003959">
    <property type="entry name" value="ATPase_AAA_core"/>
</dbReference>
<dbReference type="InterPro" id="IPR019489">
    <property type="entry name" value="Clp_ATPase_C"/>
</dbReference>
<dbReference type="InterPro" id="IPR004487">
    <property type="entry name" value="Clp_protease_ATP-bd_su_ClpX"/>
</dbReference>
<dbReference type="InterPro" id="IPR046425">
    <property type="entry name" value="ClpX_bact"/>
</dbReference>
<dbReference type="InterPro" id="IPR027417">
    <property type="entry name" value="P-loop_NTPase"/>
</dbReference>
<dbReference type="InterPro" id="IPR010603">
    <property type="entry name" value="Znf_CppX_C4"/>
</dbReference>
<dbReference type="InterPro" id="IPR038366">
    <property type="entry name" value="Znf_CppX_C4_sf"/>
</dbReference>
<dbReference type="NCBIfam" id="TIGR00382">
    <property type="entry name" value="clpX"/>
    <property type="match status" value="1"/>
</dbReference>
<dbReference type="NCBIfam" id="NF003745">
    <property type="entry name" value="PRK05342.1"/>
    <property type="match status" value="1"/>
</dbReference>
<dbReference type="PANTHER" id="PTHR48102:SF7">
    <property type="entry name" value="ATP-DEPENDENT CLP PROTEASE ATP-BINDING SUBUNIT CLPX-LIKE, MITOCHONDRIAL"/>
    <property type="match status" value="1"/>
</dbReference>
<dbReference type="PANTHER" id="PTHR48102">
    <property type="entry name" value="ATP-DEPENDENT CLP PROTEASE ATP-BINDING SUBUNIT CLPX-LIKE, MITOCHONDRIAL-RELATED"/>
    <property type="match status" value="1"/>
</dbReference>
<dbReference type="Pfam" id="PF07724">
    <property type="entry name" value="AAA_2"/>
    <property type="match status" value="1"/>
</dbReference>
<dbReference type="Pfam" id="PF10431">
    <property type="entry name" value="ClpB_D2-small"/>
    <property type="match status" value="1"/>
</dbReference>
<dbReference type="Pfam" id="PF06689">
    <property type="entry name" value="zf-C4_ClpX"/>
    <property type="match status" value="1"/>
</dbReference>
<dbReference type="SMART" id="SM00382">
    <property type="entry name" value="AAA"/>
    <property type="match status" value="1"/>
</dbReference>
<dbReference type="SMART" id="SM01086">
    <property type="entry name" value="ClpB_D2-small"/>
    <property type="match status" value="1"/>
</dbReference>
<dbReference type="SMART" id="SM00994">
    <property type="entry name" value="zf-C4_ClpX"/>
    <property type="match status" value="1"/>
</dbReference>
<dbReference type="SUPFAM" id="SSF57716">
    <property type="entry name" value="Glucocorticoid receptor-like (DNA-binding domain)"/>
    <property type="match status" value="1"/>
</dbReference>
<dbReference type="SUPFAM" id="SSF52540">
    <property type="entry name" value="P-loop containing nucleoside triphosphate hydrolases"/>
    <property type="match status" value="1"/>
</dbReference>
<dbReference type="PROSITE" id="PS51902">
    <property type="entry name" value="CLPX_ZB"/>
    <property type="match status" value="1"/>
</dbReference>
<organism>
    <name type="scientific">Frankia alni (strain DSM 45986 / CECT 9034 / ACN14a)</name>
    <dbReference type="NCBI Taxonomy" id="326424"/>
    <lineage>
        <taxon>Bacteria</taxon>
        <taxon>Bacillati</taxon>
        <taxon>Actinomycetota</taxon>
        <taxon>Actinomycetes</taxon>
        <taxon>Frankiales</taxon>
        <taxon>Frankiaceae</taxon>
        <taxon>Frankia</taxon>
    </lineage>
</organism>
<gene>
    <name evidence="1" type="primary">clpX</name>
    <name type="ordered locus">FRAAL1912</name>
</gene>
<proteinExistence type="inferred from homology"/>
<sequence>MARIGDGGDLLKCSFCGKSQKQVKKLIAGPGVYICDECIDLCNEIIEEELSESSELKWDELPKPREIYEFLDSYVVGQETAKKTLSVAVYNHYKRVQAGGSGGGGGAEGAKAEVELAKSNILLLGPTGCGKTLLAQTLARMLNVPFAIADATALTEAGYVGEDVENILLKLIQAADYDVKKAETGIIYIDEVDKIARKSENPSITRDVSGEGVQQALLKILEGTTASVPPQGGRKHPHQEFIQIDTTNVLFIVGGAFAGLDRIIESRIGKKSLGFRAVLHGKDDPDASDVFGDIMPEDLLKYGMIPEFIGRLPVITSVSNLDREALIRILTEPKNALVRQYKRLFELDSVDLDFTSDALEAIADQAILRGTGARGLRAIMEEVLLSVMYDIPSRKDVARVVVTREVVLEHVNPTLVPRDVASKRAPRQEKSA</sequence>
<protein>
    <recommendedName>
        <fullName evidence="1">ATP-dependent Clp protease ATP-binding subunit ClpX</fullName>
    </recommendedName>
</protein>
<accession>Q0RPH1</accession>
<evidence type="ECO:0000255" key="1">
    <source>
        <dbReference type="HAMAP-Rule" id="MF_00175"/>
    </source>
</evidence>
<evidence type="ECO:0000255" key="2">
    <source>
        <dbReference type="PROSITE-ProRule" id="PRU01250"/>
    </source>
</evidence>
<comment type="function">
    <text evidence="1">ATP-dependent specificity component of the Clp protease. It directs the protease to specific substrates. Can perform chaperone functions in the absence of ClpP.</text>
</comment>
<comment type="subunit">
    <text evidence="1">Component of the ClpX-ClpP complex. Forms a hexameric ring that, in the presence of ATP, binds to fourteen ClpP subunits assembled into a disk-like structure with a central cavity, resembling the structure of eukaryotic proteasomes.</text>
</comment>
<comment type="similarity">
    <text evidence="1">Belongs to the ClpX chaperone family.</text>
</comment>
<name>CLPX_FRAAA</name>
<reference key="1">
    <citation type="journal article" date="2007" name="Genome Res.">
        <title>Genome characteristics of facultatively symbiotic Frankia sp. strains reflect host range and host plant biogeography.</title>
        <authorList>
            <person name="Normand P."/>
            <person name="Lapierre P."/>
            <person name="Tisa L.S."/>
            <person name="Gogarten J.P."/>
            <person name="Alloisio N."/>
            <person name="Bagnarol E."/>
            <person name="Bassi C.A."/>
            <person name="Berry A.M."/>
            <person name="Bickhart D.M."/>
            <person name="Choisne N."/>
            <person name="Couloux A."/>
            <person name="Cournoyer B."/>
            <person name="Cruveiller S."/>
            <person name="Daubin V."/>
            <person name="Demange N."/>
            <person name="Francino M.P."/>
            <person name="Goltsman E."/>
            <person name="Huang Y."/>
            <person name="Kopp O.R."/>
            <person name="Labarre L."/>
            <person name="Lapidus A."/>
            <person name="Lavire C."/>
            <person name="Marechal J."/>
            <person name="Martinez M."/>
            <person name="Mastronunzio J.E."/>
            <person name="Mullin B.C."/>
            <person name="Niemann J."/>
            <person name="Pujic P."/>
            <person name="Rawnsley T."/>
            <person name="Rouy Z."/>
            <person name="Schenowitz C."/>
            <person name="Sellstedt A."/>
            <person name="Tavares F."/>
            <person name="Tomkins J.P."/>
            <person name="Vallenet D."/>
            <person name="Valverde C."/>
            <person name="Wall L.G."/>
            <person name="Wang Y."/>
            <person name="Medigue C."/>
            <person name="Benson D.R."/>
        </authorList>
    </citation>
    <scope>NUCLEOTIDE SEQUENCE [LARGE SCALE GENOMIC DNA]</scope>
    <source>
        <strain>DSM 45986 / CECT 9034 / ACN14a</strain>
    </source>
</reference>
<feature type="chain" id="PRO_1000024559" description="ATP-dependent Clp protease ATP-binding subunit ClpX">
    <location>
        <begin position="1"/>
        <end position="432"/>
    </location>
</feature>
<feature type="domain" description="ClpX-type ZB" evidence="2">
    <location>
        <begin position="1"/>
        <end position="54"/>
    </location>
</feature>
<feature type="binding site" evidence="2">
    <location>
        <position position="13"/>
    </location>
    <ligand>
        <name>Zn(2+)</name>
        <dbReference type="ChEBI" id="CHEBI:29105"/>
    </ligand>
</feature>
<feature type="binding site" evidence="2">
    <location>
        <position position="16"/>
    </location>
    <ligand>
        <name>Zn(2+)</name>
        <dbReference type="ChEBI" id="CHEBI:29105"/>
    </ligand>
</feature>
<feature type="binding site" evidence="2">
    <location>
        <position position="35"/>
    </location>
    <ligand>
        <name>Zn(2+)</name>
        <dbReference type="ChEBI" id="CHEBI:29105"/>
    </ligand>
</feature>
<feature type="binding site" evidence="2">
    <location>
        <position position="38"/>
    </location>
    <ligand>
        <name>Zn(2+)</name>
        <dbReference type="ChEBI" id="CHEBI:29105"/>
    </ligand>
</feature>
<feature type="binding site" evidence="1">
    <location>
        <begin position="126"/>
        <end position="133"/>
    </location>
    <ligand>
        <name>ATP</name>
        <dbReference type="ChEBI" id="CHEBI:30616"/>
    </ligand>
</feature>